<organismHost>
    <name type="scientific">Papio hamadryas ursinus</name>
    <name type="common">Chacma baboon</name>
    <dbReference type="NCBI Taxonomy" id="36229"/>
</organismHost>
<keyword id="KW-0007">Acetylation</keyword>
<keyword id="KW-0010">Activator</keyword>
<keyword id="KW-0025">Alternative splicing</keyword>
<keyword id="KW-0067">ATP-binding</keyword>
<keyword id="KW-0235">DNA replication</keyword>
<keyword id="KW-0238">DNA-binding</keyword>
<keyword id="KW-0244">Early protein</keyword>
<keyword id="KW-1078">G1/S host cell cycle checkpoint dysregulation by virus</keyword>
<keyword id="KW-0325">Glycoprotein</keyword>
<keyword id="KW-0347">Helicase</keyword>
<keyword id="KW-1048">Host nucleus</keyword>
<keyword id="KW-0945">Host-virus interaction</keyword>
<keyword id="KW-0378">Hydrolase</keyword>
<keyword id="KW-1090">Inhibition of host innate immune response by virus</keyword>
<keyword id="KW-1114">Inhibition of host interferon signaling pathway by virus</keyword>
<keyword id="KW-1096">Inhibition of host JAK1 by virus</keyword>
<keyword id="KW-0922">Interferon antiviral system evasion</keyword>
<keyword id="KW-0413">Isomerase</keyword>
<keyword id="KW-0460">Magnesium</keyword>
<keyword id="KW-0479">Metal-binding</keyword>
<keyword id="KW-1121">Modulation of host cell cycle by virus</keyword>
<keyword id="KW-0547">Nucleotide-binding</keyword>
<keyword id="KW-0553">Oncogene</keyword>
<keyword id="KW-0597">Phosphoprotein</keyword>
<keyword id="KW-0804">Transcription</keyword>
<keyword id="KW-0805">Transcription regulation</keyword>
<keyword id="KW-0899">Viral immunoevasion</keyword>
<keyword id="KW-0862">Zinc</keyword>
<keyword id="KW-0863">Zinc-finger</keyword>
<feature type="chain" id="PRO_0000358312" description="Large T antigen">
    <location>
        <begin position="1"/>
        <end position="699"/>
    </location>
</feature>
<feature type="domain" description="J" evidence="2">
    <location>
        <begin position="12"/>
        <end position="75"/>
    </location>
</feature>
<feature type="domain" description="SF3 helicase" evidence="3">
    <location>
        <begin position="402"/>
        <end position="562"/>
    </location>
</feature>
<feature type="DNA-binding region" description="T-ag OBD" evidence="4">
    <location>
        <begin position="141"/>
        <end position="256"/>
    </location>
</feature>
<feature type="zinc finger region" description="T-ag D1-type" evidence="5">
    <location>
        <begin position="267"/>
        <end position="359"/>
    </location>
</feature>
<feature type="region of interest" description="Disordered" evidence="6">
    <location>
        <begin position="115"/>
        <end position="137"/>
    </location>
</feature>
<feature type="region of interest" description="Disordered" evidence="6">
    <location>
        <begin position="637"/>
        <end position="678"/>
    </location>
</feature>
<feature type="short sequence motif" description="LXCXE motif" evidence="1">
    <location>
        <begin position="105"/>
        <end position="109"/>
    </location>
</feature>
<feature type="short sequence motif" description="Nuclear localization signal" evidence="1">
    <location>
        <begin position="127"/>
        <end position="134"/>
    </location>
</feature>
<feature type="compositionally biased region" description="Polar residues" evidence="6">
    <location>
        <begin position="643"/>
        <end position="672"/>
    </location>
</feature>
<feature type="binding site" evidence="5">
    <location>
        <position position="304"/>
    </location>
    <ligand>
        <name>Zn(2+)</name>
        <dbReference type="ChEBI" id="CHEBI:29105"/>
    </ligand>
</feature>
<feature type="binding site" evidence="5">
    <location>
        <position position="307"/>
    </location>
    <ligand>
        <name>Zn(2+)</name>
        <dbReference type="ChEBI" id="CHEBI:29105"/>
    </ligand>
</feature>
<feature type="binding site" evidence="5">
    <location>
        <position position="315"/>
    </location>
    <ligand>
        <name>Zn(2+)</name>
        <dbReference type="ChEBI" id="CHEBI:29105"/>
    </ligand>
</feature>
<feature type="binding site" evidence="5">
    <location>
        <position position="319"/>
    </location>
    <ligand>
        <name>Zn(2+)</name>
        <dbReference type="ChEBI" id="CHEBI:29105"/>
    </ligand>
</feature>
<feature type="binding site" evidence="3">
    <location>
        <begin position="428"/>
        <end position="435"/>
    </location>
    <ligand>
        <name>ATP</name>
        <dbReference type="ChEBI" id="CHEBI:30616"/>
    </ligand>
</feature>
<feature type="modified residue" description="N-acetylmethionine; by host" evidence="1">
    <location>
        <position position="1"/>
    </location>
</feature>
<feature type="modified residue" description="Phosphoserine; by host" evidence="1">
    <location>
        <position position="114"/>
    </location>
</feature>
<feature type="modified residue" description="Phosphoserine; by host" evidence="1">
    <location>
        <position position="122"/>
    </location>
</feature>
<feature type="modified residue" description="Phosphoserine; by host" evidence="1">
    <location>
        <position position="125"/>
    </location>
</feature>
<feature type="modified residue" description="Phosphothreonine; by host" evidence="1">
    <location>
        <position position="126"/>
    </location>
</feature>
<feature type="modified residue" description="Phosphoserine; by host" evidence="1">
    <location>
        <position position="661"/>
    </location>
</feature>
<feature type="modified residue" description="N6-acetyllysine; by host" evidence="1">
    <location>
        <position position="691"/>
    </location>
</feature>
<feature type="modified residue" description="Phosphothreonine; by host" evidence="1">
    <location>
        <position position="695"/>
    </location>
</feature>
<comment type="function">
    <text evidence="1">Isoform large T antigen is a key early protein essential for both driving viral replication and inducing cellular transformation. Plays a role in viral genome replication by driving entry of quiescent cells into the cell cycle and by autoregulating the synthesis of viral early mRNA. Displays highly oncogenic activities by corrupting the host cellular checkpoint mechanisms that guard cell division and the transcription, replication, and repair of DNA. Participates in the modulation of cellular gene expression preceeding viral DNA replication. This step involves binding to host key cell cycle regulators retinoblastoma protein RB1/pRb and TP53. Induces the disassembly of host E2F1 transcription factors from RB1, thus promoting transcriptional activation of E2F1-regulated S-phase genes. Inhibits host TP53 binding to DNA, abrogating the ability of TP53 to stimulate gene expression. Plays the role of a TFIID-associated factor (TAF) in transcription initiation for all three RNA polymerases, by stabilizing the TBP-TFIIA complex on promoters. Initiates viral DNA replication and unwinding via interactions with the viral origin of replication. Binds two adjacent sites in the SV40 origin. The replication fork movement is facilitated by Large T antigen helicase activity. Has processive 3'-5' DNA helicase activity which requires a short 3' single-stranded region and ATP. Activates the transcription of viral late mRNA, through host TBP and TFIIA stabilization. Interferes with histone deacetylation mediated by HDAC1, leading to activation of transcription.</text>
</comment>
<comment type="catalytic activity">
    <reaction evidence="1">
        <text>Couples ATP hydrolysis with the unwinding of duplex DNA by translocating in the 3'-5' direction.</text>
        <dbReference type="EC" id="5.6.2.4"/>
    </reaction>
</comment>
<comment type="catalytic activity">
    <reaction evidence="1">
        <text>ATP + H2O = ADP + phosphate + H(+)</text>
        <dbReference type="Rhea" id="RHEA:13065"/>
        <dbReference type="ChEBI" id="CHEBI:15377"/>
        <dbReference type="ChEBI" id="CHEBI:15378"/>
        <dbReference type="ChEBI" id="CHEBI:30616"/>
        <dbReference type="ChEBI" id="CHEBI:43474"/>
        <dbReference type="ChEBI" id="CHEBI:456216"/>
        <dbReference type="EC" id="5.6.2.4"/>
    </reaction>
</comment>
<comment type="cofactor">
    <cofactor evidence="1">
        <name>Mg(2+)</name>
        <dbReference type="ChEBI" id="CHEBI:18420"/>
    </cofactor>
    <text evidence="1">DNA helicase activity requires Mg(2+).</text>
</comment>
<comment type="subunit">
    <text evidence="1">Forms homohexamers in the presence of ATP. Interacts with host HDAC1. Interacts (via LXCXE domain) with host RB1; the interaction induces the aberrant dissociation of RB1-E2F1 complex thereby disrupting RB1's activity. Interacts (via LXCXE domain) with host pRB-related proteins RBL1 and RBL2. Interacts (via C-terminus) with host TOP1 and POLA1 allowing DNA replication. Interacts with host TP53, inhibiting TP53 binding to DNA. Interacts with host preinitiation complex components TBP, TFIIA and TFIID to regulate transcription initiation.</text>
</comment>
<comment type="subcellular location">
    <subcellularLocation>
        <location evidence="1">Host nucleus</location>
    </subcellularLocation>
</comment>
<comment type="alternative products">
    <event type="alternative splicing"/>
    <isoform>
        <id>Q3L6L5-1</id>
        <name>Large T antigen</name>
        <sequence type="displayed"/>
    </isoform>
    <isoform>
        <id>Q3L6L4-1</id>
        <name>Small t antigen</name>
        <sequence type="external"/>
    </isoform>
</comment>
<comment type="domain">
    <text evidence="1">The J domain is essential for multiple viral activities, including virion assembly, viral DNA replication, transformation and transcriptional activation.</text>
</comment>
<comment type="domain">
    <text evidence="1">The LXCXE motif specifically binds to host pRB, RBL1, and RBL2.</text>
</comment>
<comment type="domain">
    <text evidence="1">The zinc finger region contributes to protein-protein interactions essential for the assembly of stable T-antigen hexamers at the origin of replication. The hexamers are required for subsequent alterations in the structure of origin DNA.</text>
</comment>
<comment type="domain">
    <text evidence="1">The ATP binding/ATPase domain is required for proper hexamer assembly and helicase activity.</text>
</comment>
<comment type="PTM">
    <text evidence="1">Phosphorylated on both serine and threonine residues. Small t antigen inhibits the dephosphorylation by the AC form of PP2A.</text>
</comment>
<comment type="PTM">
    <text evidence="1">O-Glycosylated near the C-terminal region.</text>
</comment>
<comment type="PTM">
    <text evidence="1">Acetylated by CBP in a TP53-dependent manner.</text>
</comment>
<comment type="miscellaneous">
    <molecule>Isoform Large T antigen</molecule>
    <text>Produced by alternative initiation.</text>
</comment>
<proteinExistence type="inferred from homology"/>
<reference key="1">
    <citation type="journal article" date="2005" name="J. Virol.">
        <title>Complete nucleotide sequence of polyomavirus SA12.</title>
        <authorList>
            <person name="Cantalupo P."/>
            <person name="Doering A."/>
            <person name="Sullivan C.S."/>
            <person name="Pal A."/>
            <person name="Peden K.W."/>
            <person name="Lewis A.M."/>
            <person name="Pipas J.M."/>
        </authorList>
    </citation>
    <scope>NUCLEOTIDE SEQUENCE [GENOMIC DNA]</scope>
    <source>
        <strain>SA12</strain>
    </source>
</reference>
<reference key="2">
    <citation type="journal article" date="2006" name="J. Virol.">
        <title>Comparing phylogenetic codivergence between polyomaviruses and their hosts.</title>
        <authorList>
            <person name="Perez-Losada M."/>
            <person name="Christensen R.G."/>
            <person name="McClellan D.A."/>
            <person name="Adams B.J."/>
            <person name="Viscidi R.P."/>
            <person name="Demma J.C."/>
            <person name="Crandall K.A."/>
        </authorList>
    </citation>
    <scope>NUCLEOTIDE SEQUENCE [GENOMIC DNA]</scope>
    <source>
        <strain>SA12</strain>
    </source>
</reference>
<organism>
    <name type="scientific">Simian virus 12 (strain wt100)</name>
    <name type="common">SV-12</name>
    <name type="synonym">Baboon polyomavirus 1</name>
    <dbReference type="NCBI Taxonomy" id="557605"/>
    <lineage>
        <taxon>Viruses</taxon>
        <taxon>Monodnaviria</taxon>
        <taxon>Shotokuvirae</taxon>
        <taxon>Cossaviricota</taxon>
        <taxon>Papovaviricetes</taxon>
        <taxon>Sepolyvirales</taxon>
        <taxon>Polyomaviridae</taxon>
        <taxon>Simian virus 12</taxon>
    </lineage>
</organism>
<evidence type="ECO:0000250" key="1">
    <source>
        <dbReference type="UniProtKB" id="P03070"/>
    </source>
</evidence>
<evidence type="ECO:0000255" key="2">
    <source>
        <dbReference type="PROSITE-ProRule" id="PRU00286"/>
    </source>
</evidence>
<evidence type="ECO:0000255" key="3">
    <source>
        <dbReference type="PROSITE-ProRule" id="PRU00551"/>
    </source>
</evidence>
<evidence type="ECO:0000255" key="4">
    <source>
        <dbReference type="PROSITE-ProRule" id="PRU00620"/>
    </source>
</evidence>
<evidence type="ECO:0000255" key="5">
    <source>
        <dbReference type="PROSITE-ProRule" id="PRU00671"/>
    </source>
</evidence>
<evidence type="ECO:0000256" key="6">
    <source>
        <dbReference type="SAM" id="MobiDB-lite"/>
    </source>
</evidence>
<evidence type="ECO:0000305" key="7"/>
<protein>
    <recommendedName>
        <fullName>Large T antigen</fullName>
        <shortName>LT</shortName>
        <shortName>LT-AG</shortName>
        <ecNumber evidence="1">5.6.2.4</ecNumber>
    </recommendedName>
    <alternativeName>
        <fullName evidence="7">DNA 3'-5' helicase large T antigen</fullName>
    </alternativeName>
</protein>
<name>LT_POVS1</name>
<sequence>MDKVLNREESMELMDLLGLERAAWGNLPLMRKAYLRKCKEFHPDKGGDEDKMKRMNTLYKKMEQDVKVAHQPDFGAWHSSEVPTYGTEEWEAWWSSFNEKWDEDLFCHEDMFQSDEEGTADSQHSTPPKKKRKVEDPKDFPPDLHAFLSQAVFSNRTLACFAVYTTKEKGQILYKKLMEKYSVTFISRHSSHGHNILFFLTPHRHRVSAINNFCQKLCTFSFLICKGVNKEYLLYSTLSRDPYSIVEESIQGGLKEHDFNPEEPEETKQVSWKLITEYALETKCEDVFLLLGMYLEFQHNPEECRKCQKKEQPYHFKFHEKHFANATIFADSKNQKSICQQAVDTVLAKKRVDTLHMTREEMLTERFNHILDKMDIMFGATGSAVLEHYMAGVAWLHCLLPKMDTLIYDFLNCIVFNIPKRRYWLFKGPIDSGKTTLAAGLLDLCGGKALNVNLPMERLTFELGVAIDQFMVVFEDVKGSGAESKDLPSGHGINNLDSLRDYLDGSVKVNLEKKHLNKRTQIFPPGLVTMNEYPLPKTLQARFVKQIDFKPKIYLRKALNNSEFLLEKRILQSGMTLLLLLIWFRPVADFASDIQHRIVQWKERLDSEISMYTFSRMKYNICMGKCILDWAREEESETEDSGHGSSTESQSQCFSQASDTSGSADAPASQTPDPYDHDNPYHICKGFVCFKRPKTPPPK</sequence>
<dbReference type="EC" id="5.6.2.4" evidence="1"/>
<dbReference type="EMBL" id="AY614708">
    <property type="protein sequence ID" value="AAV75979.1"/>
    <property type="molecule type" value="Genomic_DNA"/>
</dbReference>
<dbReference type="EMBL" id="DQ435829">
    <property type="protein sequence ID" value="ABD92877.1"/>
    <property type="molecule type" value="Genomic_DNA"/>
</dbReference>
<dbReference type="RefSeq" id="YP_406555.1">
    <property type="nucleotide sequence ID" value="NC_007611.1"/>
</dbReference>
<dbReference type="SMR" id="Q3L6L5"/>
<dbReference type="GeneID" id="5123719"/>
<dbReference type="KEGG" id="vg:5123719"/>
<dbReference type="Proteomes" id="UP000130309">
    <property type="component" value="Segment"/>
</dbReference>
<dbReference type="Proteomes" id="UP000173202">
    <property type="component" value="Genome"/>
</dbReference>
<dbReference type="GO" id="GO:0042025">
    <property type="term" value="C:host cell nucleus"/>
    <property type="evidence" value="ECO:0007669"/>
    <property type="project" value="UniProtKB-SubCell"/>
</dbReference>
<dbReference type="GO" id="GO:0005524">
    <property type="term" value="F:ATP binding"/>
    <property type="evidence" value="ECO:0007669"/>
    <property type="project" value="UniProtKB-KW"/>
</dbReference>
<dbReference type="GO" id="GO:0016887">
    <property type="term" value="F:ATP hydrolysis activity"/>
    <property type="evidence" value="ECO:0007669"/>
    <property type="project" value="RHEA"/>
</dbReference>
<dbReference type="GO" id="GO:0003688">
    <property type="term" value="F:DNA replication origin binding"/>
    <property type="evidence" value="ECO:0007669"/>
    <property type="project" value="InterPro"/>
</dbReference>
<dbReference type="GO" id="GO:0004386">
    <property type="term" value="F:helicase activity"/>
    <property type="evidence" value="ECO:0007669"/>
    <property type="project" value="UniProtKB-KW"/>
</dbReference>
<dbReference type="GO" id="GO:0008270">
    <property type="term" value="F:zinc ion binding"/>
    <property type="evidence" value="ECO:0007669"/>
    <property type="project" value="UniProtKB-KW"/>
</dbReference>
<dbReference type="GO" id="GO:0006260">
    <property type="term" value="P:DNA replication"/>
    <property type="evidence" value="ECO:0007669"/>
    <property type="project" value="UniProtKB-KW"/>
</dbReference>
<dbReference type="GO" id="GO:0039645">
    <property type="term" value="P:symbiont-mediated perturbation of host cell cycle G1/S transition checkpoint"/>
    <property type="evidence" value="ECO:0007669"/>
    <property type="project" value="UniProtKB-KW"/>
</dbReference>
<dbReference type="GO" id="GO:0052170">
    <property type="term" value="P:symbiont-mediated suppression of host innate immune response"/>
    <property type="evidence" value="ECO:0007669"/>
    <property type="project" value="UniProtKB-KW"/>
</dbReference>
<dbReference type="GO" id="GO:0039576">
    <property type="term" value="P:symbiont-mediated suppression of host JAK-STAT cascade via inhibition of JAK1 activity"/>
    <property type="evidence" value="ECO:0007669"/>
    <property type="project" value="UniProtKB-KW"/>
</dbReference>
<dbReference type="GO" id="GO:0039502">
    <property type="term" value="P:symbiont-mediated suppression of host type I interferon-mediated signaling pathway"/>
    <property type="evidence" value="ECO:0007669"/>
    <property type="project" value="UniProtKB-KW"/>
</dbReference>
<dbReference type="CDD" id="cd06257">
    <property type="entry name" value="DnaJ"/>
    <property type="match status" value="1"/>
</dbReference>
<dbReference type="FunFam" id="1.10.287.110:FF:000161">
    <property type="entry name" value="Small t antigen"/>
    <property type="match status" value="1"/>
</dbReference>
<dbReference type="Gene3D" id="3.40.1310.20">
    <property type="match status" value="1"/>
</dbReference>
<dbReference type="Gene3D" id="1.10.287.110">
    <property type="entry name" value="DnaJ domain"/>
    <property type="match status" value="1"/>
</dbReference>
<dbReference type="Gene3D" id="1.20.1050.70">
    <property type="entry name" value="Large T antigen, SV40, domain 3"/>
    <property type="match status" value="1"/>
</dbReference>
<dbReference type="Gene3D" id="3.40.50.300">
    <property type="entry name" value="P-loop containing nucleotide triphosphate hydrolases"/>
    <property type="match status" value="1"/>
</dbReference>
<dbReference type="Gene3D" id="1.10.10.510">
    <property type="entry name" value="Zinc finger, large T-antigen D1 domain"/>
    <property type="match status" value="1"/>
</dbReference>
<dbReference type="InterPro" id="IPR001623">
    <property type="entry name" value="DnaJ_domain"/>
</dbReference>
<dbReference type="InterPro" id="IPR014015">
    <property type="entry name" value="Helicase_SF3_DNA-vir"/>
</dbReference>
<dbReference type="InterPro" id="IPR036869">
    <property type="entry name" value="J_dom_sf"/>
</dbReference>
<dbReference type="InterPro" id="IPR016392">
    <property type="entry name" value="Lg_T_Ag_polyomavir"/>
</dbReference>
<dbReference type="InterPro" id="IPR010932">
    <property type="entry name" value="Lg_T_Ag_Polyomavir_C"/>
</dbReference>
<dbReference type="InterPro" id="IPR027417">
    <property type="entry name" value="P-loop_NTPase"/>
</dbReference>
<dbReference type="InterPro" id="IPR003133">
    <property type="entry name" value="T_Ag_DNA-bd"/>
</dbReference>
<dbReference type="InterPro" id="IPR017910">
    <property type="entry name" value="Znf_lg_T-Ag_D1-typ"/>
</dbReference>
<dbReference type="InterPro" id="IPR037102">
    <property type="entry name" value="Znf_lg_T-Ag_D1_dom_sf"/>
</dbReference>
<dbReference type="Pfam" id="PF06431">
    <property type="entry name" value="Polyoma_lg_T_C"/>
    <property type="match status" value="1"/>
</dbReference>
<dbReference type="Pfam" id="PF02217">
    <property type="entry name" value="T_Ag_DNA_bind"/>
    <property type="match status" value="1"/>
</dbReference>
<dbReference type="PIRSF" id="PIRSF003368">
    <property type="entry name" value="Large_T_antigen_polyomaV"/>
    <property type="match status" value="1"/>
</dbReference>
<dbReference type="SMART" id="SM00271">
    <property type="entry name" value="DnaJ"/>
    <property type="match status" value="1"/>
</dbReference>
<dbReference type="SUPFAM" id="SSF46565">
    <property type="entry name" value="Chaperone J-domain"/>
    <property type="match status" value="1"/>
</dbReference>
<dbReference type="SUPFAM" id="SSF55464">
    <property type="entry name" value="Origin of replication-binding domain, RBD-like"/>
    <property type="match status" value="1"/>
</dbReference>
<dbReference type="SUPFAM" id="SSF52540">
    <property type="entry name" value="P-loop containing nucleoside triphosphate hydrolases"/>
    <property type="match status" value="1"/>
</dbReference>
<dbReference type="PROSITE" id="PS50076">
    <property type="entry name" value="DNAJ_2"/>
    <property type="match status" value="1"/>
</dbReference>
<dbReference type="PROSITE" id="PS51206">
    <property type="entry name" value="SF3_HELICASE_1"/>
    <property type="match status" value="1"/>
</dbReference>
<dbReference type="PROSITE" id="PS51287">
    <property type="entry name" value="T_AG_OBD"/>
    <property type="match status" value="1"/>
</dbReference>
<dbReference type="PROSITE" id="PS51341">
    <property type="entry name" value="ZF_LTAG_D1"/>
    <property type="match status" value="1"/>
</dbReference>
<accession>Q3L6L5</accession>
<accession>Q1W5X0</accession>